<feature type="chain" id="PRO_1000164784" description="Acyl carrier protein">
    <location>
        <begin position="1"/>
        <end position="79"/>
    </location>
</feature>
<feature type="domain" description="Carrier" evidence="2">
    <location>
        <begin position="2"/>
        <end position="77"/>
    </location>
</feature>
<feature type="modified residue" description="O-(pantetheine 4'-phosphoryl)serine" evidence="2">
    <location>
        <position position="37"/>
    </location>
</feature>
<accession>B9MDQ6</accession>
<comment type="function">
    <text evidence="1">Carrier of the growing fatty acid chain in fatty acid biosynthesis.</text>
</comment>
<comment type="pathway">
    <text evidence="1">Lipid metabolism; fatty acid biosynthesis.</text>
</comment>
<comment type="subcellular location">
    <subcellularLocation>
        <location evidence="1">Cytoplasm</location>
    </subcellularLocation>
</comment>
<comment type="PTM">
    <text evidence="1">4'-phosphopantetheine is transferred from CoA to a specific serine of apo-ACP by AcpS. This modification is essential for activity because fatty acids are bound in thioester linkage to the sulfhydryl of the prosthetic group.</text>
</comment>
<comment type="similarity">
    <text evidence="1">Belongs to the acyl carrier protein (ACP) family.</text>
</comment>
<protein>
    <recommendedName>
        <fullName evidence="1">Acyl carrier protein</fullName>
        <shortName evidence="1">ACP</shortName>
    </recommendedName>
</protein>
<evidence type="ECO:0000255" key="1">
    <source>
        <dbReference type="HAMAP-Rule" id="MF_01217"/>
    </source>
</evidence>
<evidence type="ECO:0000255" key="2">
    <source>
        <dbReference type="PROSITE-ProRule" id="PRU00258"/>
    </source>
</evidence>
<organism>
    <name type="scientific">Acidovorax ebreus (strain TPSY)</name>
    <name type="common">Diaphorobacter sp. (strain TPSY)</name>
    <dbReference type="NCBI Taxonomy" id="535289"/>
    <lineage>
        <taxon>Bacteria</taxon>
        <taxon>Pseudomonadati</taxon>
        <taxon>Pseudomonadota</taxon>
        <taxon>Betaproteobacteria</taxon>
        <taxon>Burkholderiales</taxon>
        <taxon>Comamonadaceae</taxon>
        <taxon>Diaphorobacter</taxon>
    </lineage>
</organism>
<reference key="1">
    <citation type="submission" date="2009-01" db="EMBL/GenBank/DDBJ databases">
        <title>Complete sequence of Diaphorobacter sp. TPSY.</title>
        <authorList>
            <consortium name="US DOE Joint Genome Institute"/>
            <person name="Lucas S."/>
            <person name="Copeland A."/>
            <person name="Lapidus A."/>
            <person name="Glavina del Rio T."/>
            <person name="Tice H."/>
            <person name="Bruce D."/>
            <person name="Goodwin L."/>
            <person name="Pitluck S."/>
            <person name="Chertkov O."/>
            <person name="Brettin T."/>
            <person name="Detter J.C."/>
            <person name="Han C."/>
            <person name="Larimer F."/>
            <person name="Land M."/>
            <person name="Hauser L."/>
            <person name="Kyrpides N."/>
            <person name="Mikhailova N."/>
            <person name="Coates J.D."/>
        </authorList>
    </citation>
    <scope>NUCLEOTIDE SEQUENCE [LARGE SCALE GENOMIC DNA]</scope>
    <source>
        <strain>TPSY</strain>
    </source>
</reference>
<sequence length="79" mass="8666">MSDIEARVKKIIAEQLGVEESQVTNEKAFVADLGADSLDTVELVMALEDEFGIEIPDEDAEKITTVQNAIDYANTHQKA</sequence>
<dbReference type="EMBL" id="CP001392">
    <property type="protein sequence ID" value="ACM34065.1"/>
    <property type="molecule type" value="Genomic_DNA"/>
</dbReference>
<dbReference type="RefSeq" id="WP_003058049.1">
    <property type="nucleotide sequence ID" value="NC_011992.1"/>
</dbReference>
<dbReference type="SMR" id="B9MDQ6"/>
<dbReference type="GeneID" id="94690733"/>
<dbReference type="KEGG" id="dia:Dtpsy_2630"/>
<dbReference type="eggNOG" id="COG0236">
    <property type="taxonomic scope" value="Bacteria"/>
</dbReference>
<dbReference type="HOGENOM" id="CLU_108696_5_1_4"/>
<dbReference type="UniPathway" id="UPA00094"/>
<dbReference type="Proteomes" id="UP000000450">
    <property type="component" value="Chromosome"/>
</dbReference>
<dbReference type="GO" id="GO:0005829">
    <property type="term" value="C:cytosol"/>
    <property type="evidence" value="ECO:0007669"/>
    <property type="project" value="TreeGrafter"/>
</dbReference>
<dbReference type="GO" id="GO:0016020">
    <property type="term" value="C:membrane"/>
    <property type="evidence" value="ECO:0007669"/>
    <property type="project" value="GOC"/>
</dbReference>
<dbReference type="GO" id="GO:0000035">
    <property type="term" value="F:acyl binding"/>
    <property type="evidence" value="ECO:0007669"/>
    <property type="project" value="TreeGrafter"/>
</dbReference>
<dbReference type="GO" id="GO:0000036">
    <property type="term" value="F:acyl carrier activity"/>
    <property type="evidence" value="ECO:0007669"/>
    <property type="project" value="UniProtKB-UniRule"/>
</dbReference>
<dbReference type="GO" id="GO:0031177">
    <property type="term" value="F:phosphopantetheine binding"/>
    <property type="evidence" value="ECO:0007669"/>
    <property type="project" value="InterPro"/>
</dbReference>
<dbReference type="GO" id="GO:0009245">
    <property type="term" value="P:lipid A biosynthetic process"/>
    <property type="evidence" value="ECO:0007669"/>
    <property type="project" value="TreeGrafter"/>
</dbReference>
<dbReference type="FunFam" id="1.10.1200.10:FF:000001">
    <property type="entry name" value="Acyl carrier protein"/>
    <property type="match status" value="1"/>
</dbReference>
<dbReference type="Gene3D" id="1.10.1200.10">
    <property type="entry name" value="ACP-like"/>
    <property type="match status" value="1"/>
</dbReference>
<dbReference type="HAMAP" id="MF_01217">
    <property type="entry name" value="Acyl_carrier"/>
    <property type="match status" value="1"/>
</dbReference>
<dbReference type="InterPro" id="IPR003231">
    <property type="entry name" value="ACP"/>
</dbReference>
<dbReference type="InterPro" id="IPR036736">
    <property type="entry name" value="ACP-like_sf"/>
</dbReference>
<dbReference type="InterPro" id="IPR020806">
    <property type="entry name" value="PKS_PP-bd"/>
</dbReference>
<dbReference type="InterPro" id="IPR009081">
    <property type="entry name" value="PP-bd_ACP"/>
</dbReference>
<dbReference type="InterPro" id="IPR006162">
    <property type="entry name" value="Ppantetheine_attach_site"/>
</dbReference>
<dbReference type="NCBIfam" id="TIGR00517">
    <property type="entry name" value="acyl_carrier"/>
    <property type="match status" value="1"/>
</dbReference>
<dbReference type="NCBIfam" id="NF002148">
    <property type="entry name" value="PRK00982.1-2"/>
    <property type="match status" value="1"/>
</dbReference>
<dbReference type="NCBIfam" id="NF002149">
    <property type="entry name" value="PRK00982.1-3"/>
    <property type="match status" value="1"/>
</dbReference>
<dbReference type="NCBIfam" id="NF002150">
    <property type="entry name" value="PRK00982.1-4"/>
    <property type="match status" value="1"/>
</dbReference>
<dbReference type="NCBIfam" id="NF002151">
    <property type="entry name" value="PRK00982.1-5"/>
    <property type="match status" value="1"/>
</dbReference>
<dbReference type="PANTHER" id="PTHR20863">
    <property type="entry name" value="ACYL CARRIER PROTEIN"/>
    <property type="match status" value="1"/>
</dbReference>
<dbReference type="PANTHER" id="PTHR20863:SF76">
    <property type="entry name" value="CARRIER DOMAIN-CONTAINING PROTEIN"/>
    <property type="match status" value="1"/>
</dbReference>
<dbReference type="Pfam" id="PF00550">
    <property type="entry name" value="PP-binding"/>
    <property type="match status" value="1"/>
</dbReference>
<dbReference type="SMART" id="SM00823">
    <property type="entry name" value="PKS_PP"/>
    <property type="match status" value="1"/>
</dbReference>
<dbReference type="SUPFAM" id="SSF47336">
    <property type="entry name" value="ACP-like"/>
    <property type="match status" value="1"/>
</dbReference>
<dbReference type="PROSITE" id="PS50075">
    <property type="entry name" value="CARRIER"/>
    <property type="match status" value="1"/>
</dbReference>
<dbReference type="PROSITE" id="PS00012">
    <property type="entry name" value="PHOSPHOPANTETHEINE"/>
    <property type="match status" value="1"/>
</dbReference>
<gene>
    <name evidence="1" type="primary">acpP</name>
    <name type="ordered locus">Dtpsy_2630</name>
</gene>
<keyword id="KW-0963">Cytoplasm</keyword>
<keyword id="KW-0275">Fatty acid biosynthesis</keyword>
<keyword id="KW-0276">Fatty acid metabolism</keyword>
<keyword id="KW-0444">Lipid biosynthesis</keyword>
<keyword id="KW-0443">Lipid metabolism</keyword>
<keyword id="KW-0596">Phosphopantetheine</keyword>
<keyword id="KW-0597">Phosphoprotein</keyword>
<keyword id="KW-1185">Reference proteome</keyword>
<name>ACP_ACIET</name>
<proteinExistence type="inferred from homology"/>